<dbReference type="EMBL" id="AE000516">
    <property type="protein sequence ID" value="AAK47033.1"/>
    <property type="molecule type" value="Genomic_DNA"/>
</dbReference>
<dbReference type="PIR" id="E70964">
    <property type="entry name" value="E70964"/>
</dbReference>
<dbReference type="RefSeq" id="WP_003413675.1">
    <property type="nucleotide sequence ID" value="NZ_KK341227.1"/>
</dbReference>
<dbReference type="SMR" id="P9WIR4"/>
<dbReference type="GeneID" id="45426646"/>
<dbReference type="KEGG" id="mtc:MT2719"/>
<dbReference type="PATRIC" id="fig|83331.31.peg.2928"/>
<dbReference type="HOGENOM" id="CLU_125391_0_0_11"/>
<dbReference type="Proteomes" id="UP000001020">
    <property type="component" value="Chromosome"/>
</dbReference>
<dbReference type="GO" id="GO:0046686">
    <property type="term" value="P:response to cadmium ion"/>
    <property type="evidence" value="ECO:0007669"/>
    <property type="project" value="TreeGrafter"/>
</dbReference>
<dbReference type="CDD" id="cd07254">
    <property type="entry name" value="VOC_like"/>
    <property type="match status" value="1"/>
</dbReference>
<dbReference type="FunFam" id="3.10.180.10:FF:000032">
    <property type="entry name" value="Cadmium inducible protein CadI"/>
    <property type="match status" value="1"/>
</dbReference>
<dbReference type="Gene3D" id="3.10.180.10">
    <property type="entry name" value="2,3-Dihydroxybiphenyl 1,2-Dioxygenase, domain 1"/>
    <property type="match status" value="1"/>
</dbReference>
<dbReference type="InterPro" id="IPR052393">
    <property type="entry name" value="Cadmium-induced_rsp"/>
</dbReference>
<dbReference type="InterPro" id="IPR029068">
    <property type="entry name" value="Glyas_Bleomycin-R_OHBP_Dase"/>
</dbReference>
<dbReference type="InterPro" id="IPR004360">
    <property type="entry name" value="Glyas_Fos-R_dOase_dom"/>
</dbReference>
<dbReference type="InterPro" id="IPR037523">
    <property type="entry name" value="VOC"/>
</dbReference>
<dbReference type="InterPro" id="IPR049789">
    <property type="entry name" value="YqcK/CadI-like"/>
</dbReference>
<dbReference type="NCBIfam" id="NF041414">
    <property type="entry name" value="ArsI_CadI_VOC"/>
    <property type="match status" value="1"/>
</dbReference>
<dbReference type="PANTHER" id="PTHR41294">
    <property type="entry name" value="CADMIUM-INDUCED PROTEIN CADI"/>
    <property type="match status" value="1"/>
</dbReference>
<dbReference type="PANTHER" id="PTHR41294:SF1">
    <property type="entry name" value="CADMIUM-INDUCED PROTEIN CADI"/>
    <property type="match status" value="1"/>
</dbReference>
<dbReference type="Pfam" id="PF00903">
    <property type="entry name" value="Glyoxalase"/>
    <property type="match status" value="1"/>
</dbReference>
<dbReference type="SUPFAM" id="SSF54593">
    <property type="entry name" value="Glyoxalase/Bleomycin resistance protein/Dihydroxybiphenyl dioxygenase"/>
    <property type="match status" value="1"/>
</dbReference>
<dbReference type="PROSITE" id="PS51819">
    <property type="entry name" value="VOC"/>
    <property type="match status" value="1"/>
</dbReference>
<organism>
    <name type="scientific">Mycobacterium tuberculosis (strain CDC 1551 / Oshkosh)</name>
    <dbReference type="NCBI Taxonomy" id="83331"/>
    <lineage>
        <taxon>Bacteria</taxon>
        <taxon>Bacillati</taxon>
        <taxon>Actinomycetota</taxon>
        <taxon>Actinomycetes</taxon>
        <taxon>Mycobacteriales</taxon>
        <taxon>Mycobacteriaceae</taxon>
        <taxon>Mycobacterium</taxon>
        <taxon>Mycobacterium tuberculosis complex</taxon>
    </lineage>
</organism>
<evidence type="ECO:0000250" key="1"/>
<evidence type="ECO:0000255" key="2">
    <source>
        <dbReference type="PROSITE-ProRule" id="PRU01163"/>
    </source>
</evidence>
<evidence type="ECO:0000305" key="3"/>
<name>CADI_MYCTO</name>
<proteinExistence type="inferred from homology"/>
<reference key="1">
    <citation type="journal article" date="2002" name="J. Bacteriol.">
        <title>Whole-genome comparison of Mycobacterium tuberculosis clinical and laboratory strains.</title>
        <authorList>
            <person name="Fleischmann R.D."/>
            <person name="Alland D."/>
            <person name="Eisen J.A."/>
            <person name="Carpenter L."/>
            <person name="White O."/>
            <person name="Peterson J.D."/>
            <person name="DeBoy R.T."/>
            <person name="Dodson R.J."/>
            <person name="Gwinn M.L."/>
            <person name="Haft D.H."/>
            <person name="Hickey E.K."/>
            <person name="Kolonay J.F."/>
            <person name="Nelson W.C."/>
            <person name="Umayam L.A."/>
            <person name="Ermolaeva M.D."/>
            <person name="Salzberg S.L."/>
            <person name="Delcher A."/>
            <person name="Utterback T.R."/>
            <person name="Weidman J.F."/>
            <person name="Khouri H.M."/>
            <person name="Gill J."/>
            <person name="Mikula A."/>
            <person name="Bishai W."/>
            <person name="Jacobs W.R. Jr."/>
            <person name="Venter J.C."/>
            <person name="Fraser C.M."/>
        </authorList>
    </citation>
    <scope>NUCLEOTIDE SEQUENCE [LARGE SCALE GENOMIC DNA]</scope>
    <source>
        <strain>CDC 1551 / Oshkosh</strain>
    </source>
</reference>
<accession>P9WIR4</accession>
<accession>L0TBV1</accession>
<accession>P0A5N6</accession>
<accession>P71940</accession>
<comment type="similarity">
    <text evidence="3">To B.subtilis YqcK.</text>
</comment>
<keyword id="KW-1185">Reference proteome</keyword>
<sequence>MSRVQLALNVDDLEAAITFYSRLFNAEPAKRKPGYANFAIADPPLKLVLLENPGTGGTLNHLGVEVGSSNTVHAEIARLTEAGLVTEKEIGTTCCFATQDKVWVTGPGGERWEVYTVLADSETFGSGPRHNDTSDGEASMCCDGQVAVGASG</sequence>
<protein>
    <recommendedName>
        <fullName>Cadmium-induced protein CadI</fullName>
    </recommendedName>
</protein>
<feature type="initiator methionine" description="Removed" evidence="1">
    <location>
        <position position="1"/>
    </location>
</feature>
<feature type="chain" id="PRO_0000427959" description="Cadmium-induced protein CadI">
    <location>
        <begin position="2"/>
        <end position="152"/>
    </location>
</feature>
<feature type="domain" description="VOC" evidence="2">
    <location>
        <begin position="2"/>
        <end position="117"/>
    </location>
</feature>
<gene>
    <name type="primary">cadI</name>
    <name type="ordered locus">MT2719</name>
</gene>